<feature type="chain" id="PRO_0000208574" description="Suppressor of hairless homolog">
    <location>
        <begin position="1"/>
        <end position="554"/>
    </location>
</feature>
<feature type="domain" description="IPT/TIG">
    <location>
        <begin position="381"/>
        <end position="471"/>
    </location>
</feature>
<feature type="DNA-binding region" evidence="1">
    <location>
        <begin position="83"/>
        <end position="90"/>
    </location>
</feature>
<feature type="DNA-binding region" evidence="1">
    <location>
        <begin position="218"/>
        <end position="227"/>
    </location>
</feature>
<feature type="DNA-binding region" evidence="1">
    <location>
        <begin position="291"/>
        <end position="323"/>
    </location>
</feature>
<feature type="region of interest" description="Disordered" evidence="2">
    <location>
        <begin position="1"/>
        <end position="31"/>
    </location>
</feature>
<feature type="region of interest" description="Disordered" evidence="2">
    <location>
        <begin position="489"/>
        <end position="554"/>
    </location>
</feature>
<feature type="compositionally biased region" description="Basic and acidic residues" evidence="2">
    <location>
        <begin position="508"/>
        <end position="519"/>
    </location>
</feature>
<sequence>MYHPHHLPAHGQVQSHQHREDAAATSSRDVNGGLSVTESAIASFRSLREKYPPKKLTRDAMRRYLKDPNDQTLIVLHAKVAQKSYGNEKRFFCPPPCMYLLGNGWKRKQQILEEEEGSSEAGQLHAFIGIGSSEQEMQQLHLDGKNFCTAKTLYISDTDKRKHFMLNVKMFFGGGGADVGQFSSKRIKVISKPSKKKQSLKNADLCIASGTKVALFNRLRSQTVSTRYLHVEKGNFHASSIQWGCFAIHLLDDDESESEEFSVVDGYIHYGQTVKLVCSNTGMALPRLIIRKVDKQTAILDADDPVSQLHKCAFYLKDTERMYLCLSQERIIQFQATPCPKETNKEMINDGASWTIISTDKAEYTFCDGMGPTADPVTPVPNVHSLQLNGGGDVAMLEVNGECFTSNLKVWFGEIEADTMFRCAEGLLCVVPDISAFREGWKWVKESVQVPINLVRNDGVIYPTNLTFTFTPEPGPRQHCPAALNILHGSKRPSASMPPTPVSGSEDDSGRGNESDRGDPIMPIKRPALDVHGRPVAPEAAATMNGANMLRTAS</sequence>
<accession>O76808</accession>
<organism>
    <name type="scientific">Ciona intestinalis</name>
    <name type="common">Transparent sea squirt</name>
    <name type="synonym">Ascidia intestinalis</name>
    <dbReference type="NCBI Taxonomy" id="7719"/>
    <lineage>
        <taxon>Eukaryota</taxon>
        <taxon>Metazoa</taxon>
        <taxon>Chordata</taxon>
        <taxon>Tunicata</taxon>
        <taxon>Ascidiacea</taxon>
        <taxon>Phlebobranchia</taxon>
        <taxon>Cionidae</taxon>
        <taxon>Ciona</taxon>
    </lineage>
</organism>
<keyword id="KW-0010">Activator</keyword>
<keyword id="KW-0217">Developmental protein</keyword>
<keyword id="KW-0238">DNA-binding</keyword>
<keyword id="KW-0914">Notch signaling pathway</keyword>
<keyword id="KW-0539">Nucleus</keyword>
<keyword id="KW-1185">Reference proteome</keyword>
<keyword id="KW-0677">Repeat</keyword>
<keyword id="KW-0678">Repressor</keyword>
<keyword id="KW-0804">Transcription</keyword>
<keyword id="KW-0805">Transcription regulation</keyword>
<gene>
    <name type="primary">Su(H)</name>
</gene>
<protein>
    <recommendedName>
        <fullName>Suppressor of hairless homolog</fullName>
        <shortName>Su(H)</shortName>
    </recommendedName>
</protein>
<evidence type="ECO:0000250" key="1"/>
<evidence type="ECO:0000256" key="2">
    <source>
        <dbReference type="SAM" id="MobiDB-lite"/>
    </source>
</evidence>
<evidence type="ECO:0000305" key="3"/>
<proteinExistence type="evidence at transcript level"/>
<dbReference type="EMBL" id="AF085173">
    <property type="protein sequence ID" value="AAC34125.1"/>
    <property type="molecule type" value="mRNA"/>
</dbReference>
<dbReference type="RefSeq" id="NP_001027750.1">
    <property type="nucleotide sequence ID" value="NM_001032578.1"/>
</dbReference>
<dbReference type="SMR" id="O76808"/>
<dbReference type="FunCoup" id="O76808">
    <property type="interactions" value="344"/>
</dbReference>
<dbReference type="STRING" id="7719.ENSCINP00000001527"/>
<dbReference type="Ensembl" id="ENSCINT00000001527.3">
    <property type="protein sequence ID" value="ENSCINP00000001527.3"/>
    <property type="gene ID" value="ENSCING00000000838.3"/>
</dbReference>
<dbReference type="GeneID" id="445779"/>
<dbReference type="KEGG" id="cin:445779"/>
<dbReference type="CTD" id="34881"/>
<dbReference type="eggNOG" id="KOG3743">
    <property type="taxonomic scope" value="Eukaryota"/>
</dbReference>
<dbReference type="GeneTree" id="ENSGT00390000005197"/>
<dbReference type="HOGENOM" id="CLU_022207_2_0_1"/>
<dbReference type="InParanoid" id="O76808"/>
<dbReference type="OMA" id="QRQDMPH"/>
<dbReference type="OrthoDB" id="5600360at2759"/>
<dbReference type="TreeFam" id="TF314117"/>
<dbReference type="Proteomes" id="UP000008144">
    <property type="component" value="Chromosome 2"/>
</dbReference>
<dbReference type="GO" id="GO:0005634">
    <property type="term" value="C:nucleus"/>
    <property type="evidence" value="ECO:0007669"/>
    <property type="project" value="UniProtKB-SubCell"/>
</dbReference>
<dbReference type="GO" id="GO:0001228">
    <property type="term" value="F:DNA-binding transcription activator activity, RNA polymerase II-specific"/>
    <property type="evidence" value="ECO:0007669"/>
    <property type="project" value="InterPro"/>
</dbReference>
<dbReference type="GO" id="GO:0000981">
    <property type="term" value="F:DNA-binding transcription factor activity, RNA polymerase II-specific"/>
    <property type="evidence" value="ECO:0000318"/>
    <property type="project" value="GO_Central"/>
</dbReference>
<dbReference type="GO" id="GO:0000978">
    <property type="term" value="F:RNA polymerase II cis-regulatory region sequence-specific DNA binding"/>
    <property type="evidence" value="ECO:0000318"/>
    <property type="project" value="GO_Central"/>
</dbReference>
<dbReference type="GO" id="GO:0007219">
    <property type="term" value="P:Notch signaling pathway"/>
    <property type="evidence" value="ECO:0007669"/>
    <property type="project" value="UniProtKB-KW"/>
</dbReference>
<dbReference type="CDD" id="cd01176">
    <property type="entry name" value="IPT_RBP-Jkappa"/>
    <property type="match status" value="1"/>
</dbReference>
<dbReference type="FunFam" id="2.60.40.1450:FF:000001">
    <property type="entry name" value="Recombining binding protein suppressor of hairless"/>
    <property type="match status" value="1"/>
</dbReference>
<dbReference type="FunFam" id="2.80.10.50:FF:000003">
    <property type="entry name" value="recombining binding protein suppressor of hairless"/>
    <property type="match status" value="1"/>
</dbReference>
<dbReference type="FunFam" id="2.60.40.10:FF:000074">
    <property type="entry name" value="Recombining binding protein suppressor of hairless, putative"/>
    <property type="match status" value="1"/>
</dbReference>
<dbReference type="Gene3D" id="2.80.10.50">
    <property type="match status" value="1"/>
</dbReference>
<dbReference type="Gene3D" id="2.60.40.10">
    <property type="entry name" value="Immunoglobulins"/>
    <property type="match status" value="1"/>
</dbReference>
<dbReference type="Gene3D" id="2.60.40.1450">
    <property type="entry name" value="LAG1, DNA binding domain"/>
    <property type="match status" value="1"/>
</dbReference>
<dbReference type="InterPro" id="IPR015350">
    <property type="entry name" value="Beta-trefoil_DNA-bd_dom"/>
</dbReference>
<dbReference type="InterPro" id="IPR036358">
    <property type="entry name" value="BTD_sf"/>
</dbReference>
<dbReference type="InterPro" id="IPR040159">
    <property type="entry name" value="CLS_fam"/>
</dbReference>
<dbReference type="InterPro" id="IPR013783">
    <property type="entry name" value="Ig-like_fold"/>
</dbReference>
<dbReference type="InterPro" id="IPR014756">
    <property type="entry name" value="Ig_E-set"/>
</dbReference>
<dbReference type="InterPro" id="IPR008967">
    <property type="entry name" value="p53-like_TF_DNA-bd_sf"/>
</dbReference>
<dbReference type="InterPro" id="IPR015351">
    <property type="entry name" value="RBP-J/Cbf11/Cbf12_DNA-bd"/>
</dbReference>
<dbReference type="InterPro" id="IPR037095">
    <property type="entry name" value="RBP-J/Cbf11_DNA-bd_sf"/>
</dbReference>
<dbReference type="InterPro" id="IPR038007">
    <property type="entry name" value="RBP-Jkappa_IPT"/>
</dbReference>
<dbReference type="PANTHER" id="PTHR10665">
    <property type="entry name" value="RECOMBINING BINDING PROTEIN SUPPRESSOR OF HAIRLESS"/>
    <property type="match status" value="1"/>
</dbReference>
<dbReference type="Pfam" id="PF09270">
    <property type="entry name" value="BTD"/>
    <property type="match status" value="1"/>
</dbReference>
<dbReference type="Pfam" id="PF09271">
    <property type="entry name" value="LAG1-DNAbind"/>
    <property type="match status" value="1"/>
</dbReference>
<dbReference type="Pfam" id="PF20144">
    <property type="entry name" value="TIG_SUH"/>
    <property type="match status" value="1"/>
</dbReference>
<dbReference type="SMART" id="SM01268">
    <property type="entry name" value="BTD"/>
    <property type="match status" value="1"/>
</dbReference>
<dbReference type="SMART" id="SM01267">
    <property type="entry name" value="LAG1_DNAbind"/>
    <property type="match status" value="1"/>
</dbReference>
<dbReference type="SUPFAM" id="SSF110217">
    <property type="entry name" value="DNA-binding protein LAG-1 (CSL)"/>
    <property type="match status" value="1"/>
</dbReference>
<dbReference type="SUPFAM" id="SSF81296">
    <property type="entry name" value="E set domains"/>
    <property type="match status" value="1"/>
</dbReference>
<dbReference type="SUPFAM" id="SSF49417">
    <property type="entry name" value="p53-like transcription factors"/>
    <property type="match status" value="1"/>
</dbReference>
<reference key="1">
    <citation type="journal article" date="1998" name="Dev. Biol.">
        <title>Suppressor of hairless activates brachyury expression in the Ciona embryo.</title>
        <authorList>
            <person name="Corbo J.C."/>
            <person name="Fujiwara S."/>
            <person name="Levine M."/>
            <person name="Di Gregorio A."/>
        </authorList>
    </citation>
    <scope>NUCLEOTIDE SEQUENCE [MRNA]</scope>
</reference>
<comment type="function">
    <text evidence="1">Transcriptional regulator that plays a central role in Notch signaling, a signaling pathway involved in cell-cell communication that regulates a broad spectrum of cell-fate determinations. Acts as a transcriptional repressor when it is not associated with Notch proteins. When associated with some Notch protein, it acts as a transcriptional activator that activates transcription of Notch target genes (By similarity). Required for the transcriptional expression of Brachyury, suggesting that it participates in notochord differentiation.</text>
</comment>
<comment type="subunit">
    <text evidence="1">Interacts with activated Notch proteins.</text>
</comment>
<comment type="subcellular location">
    <subcellularLocation>
        <location evidence="3">Nucleus</location>
    </subcellularLocation>
</comment>
<comment type="similarity">
    <text evidence="3">Belongs to the Su(H) family.</text>
</comment>
<name>SUH_CIOIN</name>